<feature type="chain" id="PRO_0000396953" description="Putative acetolactate synthase large subunit IlvX">
    <location>
        <begin position="1"/>
        <end position="515"/>
    </location>
</feature>
<feature type="region of interest" description="Thiamine pyrophosphate binding" evidence="1">
    <location>
        <begin position="357"/>
        <end position="436"/>
    </location>
</feature>
<feature type="binding site" evidence="1">
    <location>
        <position position="48"/>
    </location>
    <ligand>
        <name>thiamine diphosphate</name>
        <dbReference type="ChEBI" id="CHEBI:58937"/>
    </ligand>
</feature>
<feature type="binding site" evidence="1">
    <location>
        <begin position="249"/>
        <end position="269"/>
    </location>
    <ligand>
        <name>FAD</name>
        <dbReference type="ChEBI" id="CHEBI:57692"/>
    </ligand>
</feature>
<feature type="binding site" evidence="1">
    <location>
        <begin position="283"/>
        <end position="302"/>
    </location>
    <ligand>
        <name>FAD</name>
        <dbReference type="ChEBI" id="CHEBI:57692"/>
    </ligand>
</feature>
<feature type="binding site" evidence="1">
    <location>
        <position position="407"/>
    </location>
    <ligand>
        <name>Mg(2+)</name>
        <dbReference type="ChEBI" id="CHEBI:18420"/>
    </ligand>
</feature>
<feature type="binding site" evidence="1">
    <location>
        <position position="434"/>
    </location>
    <ligand>
        <name>Mg(2+)</name>
        <dbReference type="ChEBI" id="CHEBI:18420"/>
    </ligand>
</feature>
<dbReference type="EC" id="2.2.1.6"/>
<dbReference type="EMBL" id="AL123456">
    <property type="protein sequence ID" value="CCP46331.1"/>
    <property type="molecule type" value="Genomic_DNA"/>
</dbReference>
<dbReference type="PIR" id="G70806">
    <property type="entry name" value="G70806"/>
</dbReference>
<dbReference type="RefSeq" id="NP_218026.1">
    <property type="nucleotide sequence ID" value="NC_000962.3"/>
</dbReference>
<dbReference type="RefSeq" id="WP_003900872.1">
    <property type="nucleotide sequence ID" value="NZ_NVQJ01000085.1"/>
</dbReference>
<dbReference type="SMR" id="O53554"/>
<dbReference type="FunCoup" id="O53554">
    <property type="interactions" value="146"/>
</dbReference>
<dbReference type="STRING" id="83332.Rv3509c"/>
<dbReference type="PaxDb" id="83332-Rv3509c"/>
<dbReference type="DNASU" id="888267"/>
<dbReference type="GeneID" id="888267"/>
<dbReference type="KEGG" id="mtu:Rv3509c"/>
<dbReference type="KEGG" id="mtv:RVBD_3509c"/>
<dbReference type="TubercuList" id="Rv3509c"/>
<dbReference type="eggNOG" id="COG0028">
    <property type="taxonomic scope" value="Bacteria"/>
</dbReference>
<dbReference type="InParanoid" id="O53554"/>
<dbReference type="OrthoDB" id="2443624at2"/>
<dbReference type="PhylomeDB" id="O53554"/>
<dbReference type="BRENDA" id="2.2.1.6">
    <property type="organism ID" value="3445"/>
</dbReference>
<dbReference type="UniPathway" id="UPA00047">
    <property type="reaction ID" value="UER00055"/>
</dbReference>
<dbReference type="UniPathway" id="UPA00049">
    <property type="reaction ID" value="UER00059"/>
</dbReference>
<dbReference type="Proteomes" id="UP000001584">
    <property type="component" value="Chromosome"/>
</dbReference>
<dbReference type="GO" id="GO:0005576">
    <property type="term" value="C:extracellular region"/>
    <property type="evidence" value="ECO:0007005"/>
    <property type="project" value="MTBBASE"/>
</dbReference>
<dbReference type="GO" id="GO:0009274">
    <property type="term" value="C:peptidoglycan-based cell wall"/>
    <property type="evidence" value="ECO:0007005"/>
    <property type="project" value="MTBBASE"/>
</dbReference>
<dbReference type="GO" id="GO:0005886">
    <property type="term" value="C:plasma membrane"/>
    <property type="evidence" value="ECO:0007005"/>
    <property type="project" value="MTBBASE"/>
</dbReference>
<dbReference type="GO" id="GO:0003984">
    <property type="term" value="F:acetolactate synthase activity"/>
    <property type="evidence" value="ECO:0000318"/>
    <property type="project" value="GO_Central"/>
</dbReference>
<dbReference type="GO" id="GO:0050660">
    <property type="term" value="F:flavin adenine dinucleotide binding"/>
    <property type="evidence" value="ECO:0000318"/>
    <property type="project" value="GO_Central"/>
</dbReference>
<dbReference type="GO" id="GO:0000287">
    <property type="term" value="F:magnesium ion binding"/>
    <property type="evidence" value="ECO:0007669"/>
    <property type="project" value="UniProtKB-ARBA"/>
</dbReference>
<dbReference type="GO" id="GO:0030976">
    <property type="term" value="F:thiamine pyrophosphate binding"/>
    <property type="evidence" value="ECO:0007669"/>
    <property type="project" value="InterPro"/>
</dbReference>
<dbReference type="GO" id="GO:0009097">
    <property type="term" value="P:isoleucine biosynthetic process"/>
    <property type="evidence" value="ECO:0000250"/>
    <property type="project" value="UniProtKB"/>
</dbReference>
<dbReference type="GO" id="GO:0009099">
    <property type="term" value="P:L-valine biosynthetic process"/>
    <property type="evidence" value="ECO:0000250"/>
    <property type="project" value="UniProtKB"/>
</dbReference>
<dbReference type="CDD" id="cd02002">
    <property type="entry name" value="TPP_BFDC"/>
    <property type="match status" value="1"/>
</dbReference>
<dbReference type="CDD" id="cd07035">
    <property type="entry name" value="TPP_PYR_POX_like"/>
    <property type="match status" value="1"/>
</dbReference>
<dbReference type="FunFam" id="3.40.50.970:FF:000099">
    <property type="entry name" value="Probable acetohydroxyacid synthase ilvX"/>
    <property type="match status" value="1"/>
</dbReference>
<dbReference type="FunFam" id="3.40.50.970:FF:000115">
    <property type="entry name" value="Probable acetohydroxyacid synthase ilvX"/>
    <property type="match status" value="1"/>
</dbReference>
<dbReference type="Gene3D" id="3.40.50.970">
    <property type="match status" value="2"/>
</dbReference>
<dbReference type="InterPro" id="IPR029061">
    <property type="entry name" value="THDP-binding"/>
</dbReference>
<dbReference type="InterPro" id="IPR012001">
    <property type="entry name" value="Thiamin_PyroP_enz_TPP-bd_dom"/>
</dbReference>
<dbReference type="InterPro" id="IPR045229">
    <property type="entry name" value="TPP_enz"/>
</dbReference>
<dbReference type="InterPro" id="IPR011766">
    <property type="entry name" value="TPP_enzyme_TPP-bd"/>
</dbReference>
<dbReference type="NCBIfam" id="NF005760">
    <property type="entry name" value="PRK07586.1"/>
    <property type="match status" value="1"/>
</dbReference>
<dbReference type="PANTHER" id="PTHR18968:SF86">
    <property type="entry name" value="ACETOLACTATE SYNTHASE LARGE SUBUNIT ILVX-RELATED"/>
    <property type="match status" value="1"/>
</dbReference>
<dbReference type="PANTHER" id="PTHR18968">
    <property type="entry name" value="THIAMINE PYROPHOSPHATE ENZYMES"/>
    <property type="match status" value="1"/>
</dbReference>
<dbReference type="Pfam" id="PF02775">
    <property type="entry name" value="TPP_enzyme_C"/>
    <property type="match status" value="1"/>
</dbReference>
<dbReference type="Pfam" id="PF02776">
    <property type="entry name" value="TPP_enzyme_N"/>
    <property type="match status" value="1"/>
</dbReference>
<dbReference type="SUPFAM" id="SSF52518">
    <property type="entry name" value="Thiamin diphosphate-binding fold (THDP-binding)"/>
    <property type="match status" value="2"/>
</dbReference>
<sequence>MNGAQALINTLVDGGVDVCFANPGTSEMHFVAALDAVPRMRGMLTLFEGVATGAADGYARIAGRPAAVLLHLGPGLGNGLANLHNARRARVPMVVVVGDHATYHKKYDAPLESDIDAVAGTVSGWVRRTEAAADVGADAEAAIAASRSGSQIATLILPADVCWSDGAHAAAGVPAQAAAAPVDVGPVAGVLRSGEPAMMLIGGDATRGPGLTAAARIVQATGARWLCETFPTCLERGAGIPAVERLAYFAEGAAAQLDGVKHLVLAGARSPVSFFAYPGMPSDLVPAGCEVHVLAEPGGAADALAALADEVAPGTVAPVAGASRPQLPTGDLTSVSAADVVGALLPERAIVVDESNTCGVLLPQATAGAPAHDWLTLTGGAIGYGIPAAVGAAVAAPDRPVLCLESDGSAMYTISGLWSQARENLDVTTVIYNNGAYDILRIELQRVGAGSDPGPKALDLLDISRPTMDFVKIAEGMGVPARRVTTCEEFADALRAAFAEPGPHLIDVVVPSLVG</sequence>
<organism>
    <name type="scientific">Mycobacterium tuberculosis (strain ATCC 25618 / H37Rv)</name>
    <dbReference type="NCBI Taxonomy" id="83332"/>
    <lineage>
        <taxon>Bacteria</taxon>
        <taxon>Bacillati</taxon>
        <taxon>Actinomycetota</taxon>
        <taxon>Actinomycetes</taxon>
        <taxon>Mycobacteriales</taxon>
        <taxon>Mycobacteriaceae</taxon>
        <taxon>Mycobacterium</taxon>
        <taxon>Mycobacterium tuberculosis complex</taxon>
    </lineage>
</organism>
<reference key="1">
    <citation type="journal article" date="1998" name="Nature">
        <title>Deciphering the biology of Mycobacterium tuberculosis from the complete genome sequence.</title>
        <authorList>
            <person name="Cole S.T."/>
            <person name="Brosch R."/>
            <person name="Parkhill J."/>
            <person name="Garnier T."/>
            <person name="Churcher C.M."/>
            <person name="Harris D.E."/>
            <person name="Gordon S.V."/>
            <person name="Eiglmeier K."/>
            <person name="Gas S."/>
            <person name="Barry C.E. III"/>
            <person name="Tekaia F."/>
            <person name="Badcock K."/>
            <person name="Basham D."/>
            <person name="Brown D."/>
            <person name="Chillingworth T."/>
            <person name="Connor R."/>
            <person name="Davies R.M."/>
            <person name="Devlin K."/>
            <person name="Feltwell T."/>
            <person name="Gentles S."/>
            <person name="Hamlin N."/>
            <person name="Holroyd S."/>
            <person name="Hornsby T."/>
            <person name="Jagels K."/>
            <person name="Krogh A."/>
            <person name="McLean J."/>
            <person name="Moule S."/>
            <person name="Murphy L.D."/>
            <person name="Oliver S."/>
            <person name="Osborne J."/>
            <person name="Quail M.A."/>
            <person name="Rajandream M.A."/>
            <person name="Rogers J."/>
            <person name="Rutter S."/>
            <person name="Seeger K."/>
            <person name="Skelton S."/>
            <person name="Squares S."/>
            <person name="Squares R."/>
            <person name="Sulston J.E."/>
            <person name="Taylor K."/>
            <person name="Whitehead S."/>
            <person name="Barrell B.G."/>
        </authorList>
    </citation>
    <scope>NUCLEOTIDE SEQUENCE [LARGE SCALE GENOMIC DNA]</scope>
    <source>
        <strain>ATCC 25618 / H37Rv</strain>
    </source>
</reference>
<reference key="2">
    <citation type="journal article" date="2008" name="BMC Syst. Biol.">
        <title>targetTB: a target identification pipeline for Mycobacterium tuberculosis through an interactome, reactome and genome-scale structural analysis.</title>
        <authorList>
            <person name="Raman K."/>
            <person name="Yeturu K."/>
            <person name="Chandra N."/>
        </authorList>
    </citation>
    <scope>IDENTIFICATION AS A DRUG TARGET [LARGE SCALE ANALYSIS]</scope>
</reference>
<reference key="3">
    <citation type="journal article" date="2011" name="Microbiology">
        <title>Biochemical and transcription analysis of acetohydroxyacid synthase isoforms in Mycobacterium tuberculosis identifies these enzymes as potential targets for drug development.</title>
        <authorList>
            <person name="Singh V."/>
            <person name="Chandra D."/>
            <person name="Srivastava B.S."/>
            <person name="Srivastava R."/>
        </authorList>
    </citation>
    <scope>INDUCTION</scope>
</reference>
<reference key="4">
    <citation type="journal article" date="2011" name="Mol. Cell. Proteomics">
        <title>Proteogenomic analysis of Mycobacterium tuberculosis by high resolution mass spectrometry.</title>
        <authorList>
            <person name="Kelkar D.S."/>
            <person name="Kumar D."/>
            <person name="Kumar P."/>
            <person name="Balakrishnan L."/>
            <person name="Muthusamy B."/>
            <person name="Yadav A.K."/>
            <person name="Shrivastava P."/>
            <person name="Marimuthu A."/>
            <person name="Anand S."/>
            <person name="Sundaram H."/>
            <person name="Kingsbury R."/>
            <person name="Harsha H.C."/>
            <person name="Nair B."/>
            <person name="Prasad T.S."/>
            <person name="Chauhan D.S."/>
            <person name="Katoch K."/>
            <person name="Katoch V.M."/>
            <person name="Kumar P."/>
            <person name="Chaerkady R."/>
            <person name="Ramachandran S."/>
            <person name="Dash D."/>
            <person name="Pandey A."/>
        </authorList>
    </citation>
    <scope>IDENTIFICATION BY MASS SPECTROMETRY [LARGE SCALE ANALYSIS]</scope>
    <source>
        <strain>ATCC 25618 / H37Rv</strain>
    </source>
</reference>
<comment type="function">
    <text evidence="1">Catalyzes the conversion of 2 pyruvate molecules into acetolactate in the first common step of the biosynthetic pathway of the branched-amino acids such as leucine, isoleucine, and valine.</text>
</comment>
<comment type="catalytic activity">
    <reaction>
        <text>2 pyruvate + H(+) = (2S)-2-acetolactate + CO2</text>
        <dbReference type="Rhea" id="RHEA:25249"/>
        <dbReference type="ChEBI" id="CHEBI:15361"/>
        <dbReference type="ChEBI" id="CHEBI:15378"/>
        <dbReference type="ChEBI" id="CHEBI:16526"/>
        <dbReference type="ChEBI" id="CHEBI:58476"/>
        <dbReference type="EC" id="2.2.1.6"/>
    </reaction>
</comment>
<comment type="cofactor">
    <cofactor evidence="1">
        <name>Mg(2+)</name>
        <dbReference type="ChEBI" id="CHEBI:18420"/>
    </cofactor>
    <text evidence="1">Binds 1 Mg(2+) ion per subunit.</text>
</comment>
<comment type="cofactor">
    <cofactor evidence="1">
        <name>thiamine diphosphate</name>
        <dbReference type="ChEBI" id="CHEBI:58937"/>
    </cofactor>
    <text evidence="1">Binds 1 thiamine pyrophosphate per subunit.</text>
</comment>
<comment type="pathway">
    <text>Amino-acid biosynthesis; L-isoleucine biosynthesis; L-isoleucine from 2-oxobutanoate: step 1/4.</text>
</comment>
<comment type="pathway">
    <text>Amino-acid biosynthesis; L-valine biosynthesis; L-valine from pyruvate: step 1/4.</text>
</comment>
<comment type="subunit">
    <text evidence="1">Heterodimer of large catalytic subunit and small regulatory subunit.</text>
</comment>
<comment type="induction">
    <text evidence="2">The expression is high during the mid-exponential phase and low during the stationary phase.</text>
</comment>
<comment type="miscellaneous">
    <text>Was identified as a high-confidence drug target.</text>
</comment>
<comment type="similarity">
    <text evidence="3">Belongs to the TPP enzyme family.</text>
</comment>
<protein>
    <recommendedName>
        <fullName>Putative acetolactate synthase large subunit IlvX</fullName>
        <shortName>ALS</shortName>
        <ecNumber>2.2.1.6</ecNumber>
    </recommendedName>
    <alternativeName>
        <fullName>Acetohydroxy-acid synthase large subunit</fullName>
        <shortName>AHAS</shortName>
    </alternativeName>
</protein>
<name>ILVX_MYCTU</name>
<gene>
    <name type="primary">ilvX</name>
    <name type="ordered locus">Rv3509c</name>
</gene>
<accession>O53554</accession>
<accession>L0TFM4</accession>
<keyword id="KW-0028">Amino-acid biosynthesis</keyword>
<keyword id="KW-0100">Branched-chain amino acid biosynthesis</keyword>
<keyword id="KW-0274">FAD</keyword>
<keyword id="KW-0285">Flavoprotein</keyword>
<keyword id="KW-0460">Magnesium</keyword>
<keyword id="KW-0479">Metal-binding</keyword>
<keyword id="KW-1185">Reference proteome</keyword>
<keyword id="KW-0786">Thiamine pyrophosphate</keyword>
<keyword id="KW-0808">Transferase</keyword>
<proteinExistence type="evidence at protein level"/>
<evidence type="ECO:0000250" key="1"/>
<evidence type="ECO:0000269" key="2">
    <source>
    </source>
</evidence>
<evidence type="ECO:0000305" key="3"/>